<feature type="chain" id="PRO_0000214613" description="N(4)-acetylcytidine amidohydrolase">
    <location>
        <begin position="1"/>
        <end position="102"/>
    </location>
</feature>
<feature type="domain" description="ASCH" evidence="1">
    <location>
        <begin position="6"/>
        <end position="92"/>
    </location>
</feature>
<feature type="active site" description="Proton acceptor" evidence="2">
    <location>
        <position position="20"/>
    </location>
</feature>
<feature type="active site" description="Nucleophile" evidence="2">
    <location>
        <position position="23"/>
    </location>
</feature>
<feature type="active site" description="Proton donor" evidence="2">
    <location>
        <position position="73"/>
    </location>
</feature>
<sequence>MNREITFFGRFEADILADRKTITIRDSSESDFRSGEVLRVCRNEDGVFFCHIKVKSVTPVTLDGLSERHAEQENMSLDELKKVIKAIYPGLDRFYVIEFTRC</sequence>
<dbReference type="EC" id="3.5.1.135" evidence="2"/>
<dbReference type="EMBL" id="AL590842">
    <property type="protein sequence ID" value="CAL20419.1"/>
    <property type="molecule type" value="Genomic_DNA"/>
</dbReference>
<dbReference type="EMBL" id="AE009952">
    <property type="protein sequence ID" value="AAM86085.1"/>
    <property type="status" value="ALT_INIT"/>
    <property type="molecule type" value="Genomic_DNA"/>
</dbReference>
<dbReference type="EMBL" id="AE017042">
    <property type="protein sequence ID" value="AAS61848.1"/>
    <property type="status" value="ALT_INIT"/>
    <property type="molecule type" value="Genomic_DNA"/>
</dbReference>
<dbReference type="PIR" id="AH0216">
    <property type="entry name" value="AH0216"/>
</dbReference>
<dbReference type="RefSeq" id="YP_002346775.1">
    <property type="nucleotide sequence ID" value="NC_003143.1"/>
</dbReference>
<dbReference type="SMR" id="Q8ZFD6"/>
<dbReference type="STRING" id="214092.YPO1778"/>
<dbReference type="PaxDb" id="214092-YPO1778"/>
<dbReference type="DNASU" id="1147476"/>
<dbReference type="EnsemblBacteria" id="AAS61848">
    <property type="protein sequence ID" value="AAS61848"/>
    <property type="gene ID" value="YP_1615"/>
</dbReference>
<dbReference type="KEGG" id="ype:YPO1778"/>
<dbReference type="KEGG" id="ypk:y2529"/>
<dbReference type="KEGG" id="ypm:YP_1615"/>
<dbReference type="PATRIC" id="fig|214092.21.peg.2136"/>
<dbReference type="eggNOG" id="COG3097">
    <property type="taxonomic scope" value="Bacteria"/>
</dbReference>
<dbReference type="HOGENOM" id="CLU_152586_0_0_6"/>
<dbReference type="OMA" id="HARQENM"/>
<dbReference type="OrthoDB" id="8590202at2"/>
<dbReference type="Proteomes" id="UP000000815">
    <property type="component" value="Chromosome"/>
</dbReference>
<dbReference type="Proteomes" id="UP000001019">
    <property type="component" value="Chromosome"/>
</dbReference>
<dbReference type="Proteomes" id="UP000002490">
    <property type="component" value="Chromosome"/>
</dbReference>
<dbReference type="GO" id="GO:0005829">
    <property type="term" value="C:cytosol"/>
    <property type="evidence" value="ECO:0000318"/>
    <property type="project" value="GO_Central"/>
</dbReference>
<dbReference type="GO" id="GO:0016813">
    <property type="term" value="F:hydrolase activity, acting on carbon-nitrogen (but not peptide) bonds, in linear amidines"/>
    <property type="evidence" value="ECO:0007669"/>
    <property type="project" value="UniProtKB-UniRule"/>
</dbReference>
<dbReference type="GO" id="GO:0106251">
    <property type="term" value="F:N4-acetylcytidine amidohydrolase activity"/>
    <property type="evidence" value="ECO:0007669"/>
    <property type="project" value="RHEA"/>
</dbReference>
<dbReference type="CDD" id="cd06552">
    <property type="entry name" value="ASCH_yqfb_like"/>
    <property type="match status" value="1"/>
</dbReference>
<dbReference type="FunFam" id="2.30.130.30:FF:000001">
    <property type="entry name" value="UPF0267 protein YqfB"/>
    <property type="match status" value="1"/>
</dbReference>
<dbReference type="Gene3D" id="2.30.130.30">
    <property type="entry name" value="Hypothetical protein"/>
    <property type="match status" value="1"/>
</dbReference>
<dbReference type="HAMAP" id="MF_00684">
    <property type="entry name" value="ac4C_amidohydr"/>
    <property type="match status" value="1"/>
</dbReference>
<dbReference type="InterPro" id="IPR008314">
    <property type="entry name" value="AC4CH"/>
</dbReference>
<dbReference type="InterPro" id="IPR007374">
    <property type="entry name" value="ASCH_domain"/>
</dbReference>
<dbReference type="InterPro" id="IPR015947">
    <property type="entry name" value="PUA-like_sf"/>
</dbReference>
<dbReference type="NCBIfam" id="NF003443">
    <property type="entry name" value="PRK04980.1"/>
    <property type="match status" value="1"/>
</dbReference>
<dbReference type="PANTHER" id="PTHR38088">
    <property type="entry name" value="UCP029143 FAMILY PROTEIN"/>
    <property type="match status" value="1"/>
</dbReference>
<dbReference type="PANTHER" id="PTHR38088:SF2">
    <property type="entry name" value="UCP029143 FAMILY PROTEIN"/>
    <property type="match status" value="1"/>
</dbReference>
<dbReference type="Pfam" id="PF04266">
    <property type="entry name" value="ASCH"/>
    <property type="match status" value="1"/>
</dbReference>
<dbReference type="PIRSF" id="PIRSF029143">
    <property type="entry name" value="UCP029143"/>
    <property type="match status" value="1"/>
</dbReference>
<dbReference type="SMART" id="SM01022">
    <property type="entry name" value="ASCH"/>
    <property type="match status" value="1"/>
</dbReference>
<dbReference type="SUPFAM" id="SSF88697">
    <property type="entry name" value="PUA domain-like"/>
    <property type="match status" value="1"/>
</dbReference>
<accession>Q8ZFD6</accession>
<accession>Q0WG13</accession>
<accession>Q8D096</accession>
<keyword id="KW-0378">Hydrolase</keyword>
<keyword id="KW-1185">Reference proteome</keyword>
<evidence type="ECO:0000255" key="1"/>
<evidence type="ECO:0000255" key="2">
    <source>
        <dbReference type="HAMAP-Rule" id="MF_00684"/>
    </source>
</evidence>
<evidence type="ECO:0000305" key="3"/>
<gene>
    <name type="ordered locus">YPO1778</name>
    <name type="ordered locus">y2529</name>
    <name type="ordered locus">YP_1615</name>
</gene>
<comment type="function">
    <text evidence="2">Catalyzes the hydrolysis of N(4)-acetylcytidine (ac4C).</text>
</comment>
<comment type="catalytic activity">
    <reaction evidence="2">
        <text>N(4)-acetylcytidine + H2O = cytidine + acetate + H(+)</text>
        <dbReference type="Rhea" id="RHEA:62932"/>
        <dbReference type="ChEBI" id="CHEBI:15377"/>
        <dbReference type="ChEBI" id="CHEBI:15378"/>
        <dbReference type="ChEBI" id="CHEBI:17562"/>
        <dbReference type="ChEBI" id="CHEBI:30089"/>
        <dbReference type="ChEBI" id="CHEBI:70989"/>
        <dbReference type="EC" id="3.5.1.135"/>
    </reaction>
</comment>
<comment type="catalytic activity">
    <reaction evidence="2">
        <text>N(4)-acetyl-2'-deoxycytidine + H2O = 2'-deoxycytidine + acetate + H(+)</text>
        <dbReference type="Rhea" id="RHEA:62936"/>
        <dbReference type="ChEBI" id="CHEBI:15377"/>
        <dbReference type="ChEBI" id="CHEBI:15378"/>
        <dbReference type="ChEBI" id="CHEBI:15698"/>
        <dbReference type="ChEBI" id="CHEBI:30089"/>
        <dbReference type="ChEBI" id="CHEBI:146133"/>
        <dbReference type="EC" id="3.5.1.135"/>
    </reaction>
</comment>
<comment type="catalytic activity">
    <reaction evidence="2">
        <text>N(4)-acetylcytosine + H2O = cytosine + acetate + H(+)</text>
        <dbReference type="Rhea" id="RHEA:62940"/>
        <dbReference type="ChEBI" id="CHEBI:15377"/>
        <dbReference type="ChEBI" id="CHEBI:15378"/>
        <dbReference type="ChEBI" id="CHEBI:16040"/>
        <dbReference type="ChEBI" id="CHEBI:30089"/>
        <dbReference type="ChEBI" id="CHEBI:146134"/>
        <dbReference type="EC" id="3.5.1.135"/>
    </reaction>
</comment>
<comment type="similarity">
    <text evidence="2">Belongs to the N(4)-acetylcytidine amidohydrolase family.</text>
</comment>
<comment type="sequence caution" evidence="3">
    <conflict type="erroneous initiation">
        <sequence resource="EMBL-CDS" id="AAM86085"/>
    </conflict>
</comment>
<comment type="sequence caution" evidence="3">
    <conflict type="erroneous initiation">
        <sequence resource="EMBL-CDS" id="AAS61848"/>
    </conflict>
</comment>
<organism>
    <name type="scientific">Yersinia pestis</name>
    <dbReference type="NCBI Taxonomy" id="632"/>
    <lineage>
        <taxon>Bacteria</taxon>
        <taxon>Pseudomonadati</taxon>
        <taxon>Pseudomonadota</taxon>
        <taxon>Gammaproteobacteria</taxon>
        <taxon>Enterobacterales</taxon>
        <taxon>Yersiniaceae</taxon>
        <taxon>Yersinia</taxon>
    </lineage>
</organism>
<name>AC4CH_YERPE</name>
<reference key="1">
    <citation type="journal article" date="2001" name="Nature">
        <title>Genome sequence of Yersinia pestis, the causative agent of plague.</title>
        <authorList>
            <person name="Parkhill J."/>
            <person name="Wren B.W."/>
            <person name="Thomson N.R."/>
            <person name="Titball R.W."/>
            <person name="Holden M.T.G."/>
            <person name="Prentice M.B."/>
            <person name="Sebaihia M."/>
            <person name="James K.D."/>
            <person name="Churcher C.M."/>
            <person name="Mungall K.L."/>
            <person name="Baker S."/>
            <person name="Basham D."/>
            <person name="Bentley S.D."/>
            <person name="Brooks K."/>
            <person name="Cerdeno-Tarraga A.-M."/>
            <person name="Chillingworth T."/>
            <person name="Cronin A."/>
            <person name="Davies R.M."/>
            <person name="Davis P."/>
            <person name="Dougan G."/>
            <person name="Feltwell T."/>
            <person name="Hamlin N."/>
            <person name="Holroyd S."/>
            <person name="Jagels K."/>
            <person name="Karlyshev A.V."/>
            <person name="Leather S."/>
            <person name="Moule S."/>
            <person name="Oyston P.C.F."/>
            <person name="Quail M.A."/>
            <person name="Rutherford K.M."/>
            <person name="Simmonds M."/>
            <person name="Skelton J."/>
            <person name="Stevens K."/>
            <person name="Whitehead S."/>
            <person name="Barrell B.G."/>
        </authorList>
    </citation>
    <scope>NUCLEOTIDE SEQUENCE [LARGE SCALE GENOMIC DNA]</scope>
    <source>
        <strain>CO-92 / Biovar Orientalis</strain>
    </source>
</reference>
<reference key="2">
    <citation type="journal article" date="2002" name="J. Bacteriol.">
        <title>Genome sequence of Yersinia pestis KIM.</title>
        <authorList>
            <person name="Deng W."/>
            <person name="Burland V."/>
            <person name="Plunkett G. III"/>
            <person name="Boutin A."/>
            <person name="Mayhew G.F."/>
            <person name="Liss P."/>
            <person name="Perna N.T."/>
            <person name="Rose D.J."/>
            <person name="Mau B."/>
            <person name="Zhou S."/>
            <person name="Schwartz D.C."/>
            <person name="Fetherston J.D."/>
            <person name="Lindler L.E."/>
            <person name="Brubaker R.R."/>
            <person name="Plano G.V."/>
            <person name="Straley S.C."/>
            <person name="McDonough K.A."/>
            <person name="Nilles M.L."/>
            <person name="Matson J.S."/>
            <person name="Blattner F.R."/>
            <person name="Perry R.D."/>
        </authorList>
    </citation>
    <scope>NUCLEOTIDE SEQUENCE [LARGE SCALE GENOMIC DNA]</scope>
    <source>
        <strain>KIM10+ / Biovar Mediaevalis</strain>
    </source>
</reference>
<reference key="3">
    <citation type="journal article" date="2004" name="DNA Res.">
        <title>Complete genome sequence of Yersinia pestis strain 91001, an isolate avirulent to humans.</title>
        <authorList>
            <person name="Song Y."/>
            <person name="Tong Z."/>
            <person name="Wang J."/>
            <person name="Wang L."/>
            <person name="Guo Z."/>
            <person name="Han Y."/>
            <person name="Zhang J."/>
            <person name="Pei D."/>
            <person name="Zhou D."/>
            <person name="Qin H."/>
            <person name="Pang X."/>
            <person name="Han Y."/>
            <person name="Zhai J."/>
            <person name="Li M."/>
            <person name="Cui B."/>
            <person name="Qi Z."/>
            <person name="Jin L."/>
            <person name="Dai R."/>
            <person name="Chen F."/>
            <person name="Li S."/>
            <person name="Ye C."/>
            <person name="Du Z."/>
            <person name="Lin W."/>
            <person name="Wang J."/>
            <person name="Yu J."/>
            <person name="Yang H."/>
            <person name="Wang J."/>
            <person name="Huang P."/>
            <person name="Yang R."/>
        </authorList>
    </citation>
    <scope>NUCLEOTIDE SEQUENCE [LARGE SCALE GENOMIC DNA]</scope>
    <source>
        <strain>91001 / Biovar Mediaevalis</strain>
    </source>
</reference>
<proteinExistence type="inferred from homology"/>
<protein>
    <recommendedName>
        <fullName evidence="2">N(4)-acetylcytidine amidohydrolase</fullName>
        <shortName evidence="2">ac4C amidohydrolase</shortName>
        <ecNumber evidence="2">3.5.1.135</ecNumber>
    </recommendedName>
</protein>